<protein>
    <recommendedName>
        <fullName evidence="1">Glutamate 5-kinase</fullName>
        <ecNumber evidence="1">2.7.2.11</ecNumber>
    </recommendedName>
    <alternativeName>
        <fullName evidence="1">Gamma-glutamyl kinase</fullName>
        <shortName evidence="1">GK</shortName>
    </alternativeName>
</protein>
<gene>
    <name evidence="1" type="primary">proB</name>
    <name type="ordered locus">STM0321</name>
</gene>
<feature type="chain" id="PRO_0000109721" description="Glutamate 5-kinase">
    <location>
        <begin position="1"/>
        <end position="367"/>
    </location>
</feature>
<feature type="domain" description="PUA" evidence="1">
    <location>
        <begin position="275"/>
        <end position="353"/>
    </location>
</feature>
<feature type="binding site" evidence="1">
    <location>
        <position position="10"/>
    </location>
    <ligand>
        <name>ATP</name>
        <dbReference type="ChEBI" id="CHEBI:30616"/>
    </ligand>
</feature>
<feature type="binding site" evidence="1">
    <location>
        <position position="50"/>
    </location>
    <ligand>
        <name>substrate</name>
    </ligand>
</feature>
<feature type="binding site" evidence="1">
    <location>
        <position position="137"/>
    </location>
    <ligand>
        <name>substrate</name>
    </ligand>
</feature>
<feature type="binding site" evidence="1">
    <location>
        <position position="149"/>
    </location>
    <ligand>
        <name>substrate</name>
    </ligand>
</feature>
<feature type="binding site" evidence="1">
    <location>
        <begin position="169"/>
        <end position="170"/>
    </location>
    <ligand>
        <name>ATP</name>
        <dbReference type="ChEBI" id="CHEBI:30616"/>
    </ligand>
</feature>
<feature type="binding site" evidence="1">
    <location>
        <begin position="211"/>
        <end position="217"/>
    </location>
    <ligand>
        <name>ATP</name>
        <dbReference type="ChEBI" id="CHEBI:30616"/>
    </ligand>
</feature>
<dbReference type="EC" id="2.7.2.11" evidence="1"/>
<dbReference type="EMBL" id="AE006468">
    <property type="protein sequence ID" value="AAL19277.1"/>
    <property type="molecule type" value="Genomic_DNA"/>
</dbReference>
<dbReference type="RefSeq" id="NP_459318.1">
    <property type="nucleotide sequence ID" value="NC_003197.2"/>
</dbReference>
<dbReference type="RefSeq" id="WP_001285275.1">
    <property type="nucleotide sequence ID" value="NC_003197.2"/>
</dbReference>
<dbReference type="SMR" id="P65792"/>
<dbReference type="STRING" id="99287.STM0321"/>
<dbReference type="PaxDb" id="99287-STM0321"/>
<dbReference type="GeneID" id="1251840"/>
<dbReference type="KEGG" id="stm:STM0321"/>
<dbReference type="PATRIC" id="fig|99287.12.peg.342"/>
<dbReference type="HOGENOM" id="CLU_025400_2_0_6"/>
<dbReference type="OMA" id="SVTELMF"/>
<dbReference type="PhylomeDB" id="P65792"/>
<dbReference type="BioCyc" id="SENT99287:STM0321-MONOMER"/>
<dbReference type="UniPathway" id="UPA00098">
    <property type="reaction ID" value="UER00359"/>
</dbReference>
<dbReference type="Proteomes" id="UP000001014">
    <property type="component" value="Chromosome"/>
</dbReference>
<dbReference type="GO" id="GO:0005829">
    <property type="term" value="C:cytosol"/>
    <property type="evidence" value="ECO:0000318"/>
    <property type="project" value="GO_Central"/>
</dbReference>
<dbReference type="GO" id="GO:0005524">
    <property type="term" value="F:ATP binding"/>
    <property type="evidence" value="ECO:0007669"/>
    <property type="project" value="UniProtKB-KW"/>
</dbReference>
<dbReference type="GO" id="GO:0004349">
    <property type="term" value="F:glutamate 5-kinase activity"/>
    <property type="evidence" value="ECO:0000318"/>
    <property type="project" value="GO_Central"/>
</dbReference>
<dbReference type="GO" id="GO:0003723">
    <property type="term" value="F:RNA binding"/>
    <property type="evidence" value="ECO:0007669"/>
    <property type="project" value="InterPro"/>
</dbReference>
<dbReference type="GO" id="GO:0055129">
    <property type="term" value="P:L-proline biosynthetic process"/>
    <property type="evidence" value="ECO:0007669"/>
    <property type="project" value="UniProtKB-UniRule"/>
</dbReference>
<dbReference type="GO" id="GO:0006561">
    <property type="term" value="P:proline biosynthetic process"/>
    <property type="evidence" value="ECO:0000318"/>
    <property type="project" value="GO_Central"/>
</dbReference>
<dbReference type="CDD" id="cd04242">
    <property type="entry name" value="AAK_G5K_ProB"/>
    <property type="match status" value="1"/>
</dbReference>
<dbReference type="CDD" id="cd21157">
    <property type="entry name" value="PUA_G5K"/>
    <property type="match status" value="1"/>
</dbReference>
<dbReference type="FunFam" id="2.30.130.10:FF:000003">
    <property type="entry name" value="Glutamate 5-kinase"/>
    <property type="match status" value="1"/>
</dbReference>
<dbReference type="FunFam" id="3.40.1160.10:FF:000006">
    <property type="entry name" value="Glutamate 5-kinase"/>
    <property type="match status" value="1"/>
</dbReference>
<dbReference type="Gene3D" id="3.40.1160.10">
    <property type="entry name" value="Acetylglutamate kinase-like"/>
    <property type="match status" value="2"/>
</dbReference>
<dbReference type="Gene3D" id="2.30.130.10">
    <property type="entry name" value="PUA domain"/>
    <property type="match status" value="1"/>
</dbReference>
<dbReference type="HAMAP" id="MF_00456">
    <property type="entry name" value="ProB"/>
    <property type="match status" value="1"/>
</dbReference>
<dbReference type="InterPro" id="IPR036393">
    <property type="entry name" value="AceGlu_kinase-like_sf"/>
</dbReference>
<dbReference type="InterPro" id="IPR001048">
    <property type="entry name" value="Asp/Glu/Uridylate_kinase"/>
</dbReference>
<dbReference type="InterPro" id="IPR041739">
    <property type="entry name" value="G5K_ProB"/>
</dbReference>
<dbReference type="InterPro" id="IPR001057">
    <property type="entry name" value="Glu/AcGlu_kinase"/>
</dbReference>
<dbReference type="InterPro" id="IPR011529">
    <property type="entry name" value="Glu_5kinase"/>
</dbReference>
<dbReference type="InterPro" id="IPR005715">
    <property type="entry name" value="Glu_5kinase/COase_Synthase"/>
</dbReference>
<dbReference type="InterPro" id="IPR019797">
    <property type="entry name" value="Glutamate_5-kinase_CS"/>
</dbReference>
<dbReference type="InterPro" id="IPR002478">
    <property type="entry name" value="PUA"/>
</dbReference>
<dbReference type="InterPro" id="IPR015947">
    <property type="entry name" value="PUA-like_sf"/>
</dbReference>
<dbReference type="InterPro" id="IPR036974">
    <property type="entry name" value="PUA_sf"/>
</dbReference>
<dbReference type="NCBIfam" id="TIGR01027">
    <property type="entry name" value="proB"/>
    <property type="match status" value="1"/>
</dbReference>
<dbReference type="PANTHER" id="PTHR43654">
    <property type="entry name" value="GLUTAMATE 5-KINASE"/>
    <property type="match status" value="1"/>
</dbReference>
<dbReference type="PANTHER" id="PTHR43654:SF1">
    <property type="entry name" value="ISOPENTENYL PHOSPHATE KINASE"/>
    <property type="match status" value="1"/>
</dbReference>
<dbReference type="Pfam" id="PF00696">
    <property type="entry name" value="AA_kinase"/>
    <property type="match status" value="1"/>
</dbReference>
<dbReference type="Pfam" id="PF01472">
    <property type="entry name" value="PUA"/>
    <property type="match status" value="1"/>
</dbReference>
<dbReference type="PIRSF" id="PIRSF000729">
    <property type="entry name" value="GK"/>
    <property type="match status" value="1"/>
</dbReference>
<dbReference type="PRINTS" id="PR00474">
    <property type="entry name" value="GLU5KINASE"/>
</dbReference>
<dbReference type="SMART" id="SM00359">
    <property type="entry name" value="PUA"/>
    <property type="match status" value="1"/>
</dbReference>
<dbReference type="SUPFAM" id="SSF53633">
    <property type="entry name" value="Carbamate kinase-like"/>
    <property type="match status" value="1"/>
</dbReference>
<dbReference type="SUPFAM" id="SSF88697">
    <property type="entry name" value="PUA domain-like"/>
    <property type="match status" value="1"/>
</dbReference>
<dbReference type="PROSITE" id="PS00902">
    <property type="entry name" value="GLUTAMATE_5_KINASE"/>
    <property type="match status" value="1"/>
</dbReference>
<dbReference type="PROSITE" id="PS50890">
    <property type="entry name" value="PUA"/>
    <property type="match status" value="1"/>
</dbReference>
<name>PROB_SALTY</name>
<accession>P65792</accession>
<accession>Q8XF21</accession>
<reference key="1">
    <citation type="journal article" date="2001" name="Nature">
        <title>Complete genome sequence of Salmonella enterica serovar Typhimurium LT2.</title>
        <authorList>
            <person name="McClelland M."/>
            <person name="Sanderson K.E."/>
            <person name="Spieth J."/>
            <person name="Clifton S.W."/>
            <person name="Latreille P."/>
            <person name="Courtney L."/>
            <person name="Porwollik S."/>
            <person name="Ali J."/>
            <person name="Dante M."/>
            <person name="Du F."/>
            <person name="Hou S."/>
            <person name="Layman D."/>
            <person name="Leonard S."/>
            <person name="Nguyen C."/>
            <person name="Scott K."/>
            <person name="Holmes A."/>
            <person name="Grewal N."/>
            <person name="Mulvaney E."/>
            <person name="Ryan E."/>
            <person name="Sun H."/>
            <person name="Florea L."/>
            <person name="Miller W."/>
            <person name="Stoneking T."/>
            <person name="Nhan M."/>
            <person name="Waterston R."/>
            <person name="Wilson R.K."/>
        </authorList>
    </citation>
    <scope>NUCLEOTIDE SEQUENCE [LARGE SCALE GENOMIC DNA]</scope>
    <source>
        <strain>LT2 / SGSC1412 / ATCC 700720</strain>
    </source>
</reference>
<proteinExistence type="inferred from homology"/>
<organism>
    <name type="scientific">Salmonella typhimurium (strain LT2 / SGSC1412 / ATCC 700720)</name>
    <dbReference type="NCBI Taxonomy" id="99287"/>
    <lineage>
        <taxon>Bacteria</taxon>
        <taxon>Pseudomonadati</taxon>
        <taxon>Pseudomonadota</taxon>
        <taxon>Gammaproteobacteria</taxon>
        <taxon>Enterobacterales</taxon>
        <taxon>Enterobacteriaceae</taxon>
        <taxon>Salmonella</taxon>
    </lineage>
</organism>
<comment type="function">
    <text evidence="1">Catalyzes the transfer of a phosphate group to glutamate to form L-glutamate 5-phosphate.</text>
</comment>
<comment type="catalytic activity">
    <reaction evidence="1">
        <text>L-glutamate + ATP = L-glutamyl 5-phosphate + ADP</text>
        <dbReference type="Rhea" id="RHEA:14877"/>
        <dbReference type="ChEBI" id="CHEBI:29985"/>
        <dbReference type="ChEBI" id="CHEBI:30616"/>
        <dbReference type="ChEBI" id="CHEBI:58274"/>
        <dbReference type="ChEBI" id="CHEBI:456216"/>
        <dbReference type="EC" id="2.7.2.11"/>
    </reaction>
</comment>
<comment type="pathway">
    <text evidence="1">Amino-acid biosynthesis; L-proline biosynthesis; L-glutamate 5-semialdehyde from L-glutamate: step 1/2.</text>
</comment>
<comment type="subcellular location">
    <subcellularLocation>
        <location evidence="1">Cytoplasm</location>
    </subcellularLocation>
</comment>
<comment type="similarity">
    <text evidence="1">Belongs to the glutamate 5-kinase family.</text>
</comment>
<evidence type="ECO:0000255" key="1">
    <source>
        <dbReference type="HAMAP-Rule" id="MF_00456"/>
    </source>
</evidence>
<sequence length="367" mass="39141">MSDSQTLVVKLGTSVLTGGSRRLNRAHIVELVRQCAQLHAAGHRIVIVTSGAIAAGREHLGYPELPATIASKQLLAAVGQSRLIQLWEQLFSIYGIHIGQMLLTRADMEDRERFLNARDTLRALLDNHIVPVINENDAVATAEIKVGDNDNLSALAAILAGADKLLLLTDQQGLFTADPRSNPQAELIKDVYGVDDALRSIAGDSVSGLGTGGMSTKLQAADVACRAGIDTIIASGSKPGVIGDVMEGISVGTRFHAQASPLENRKRWIFGAPPAGEITVDEGATAAMLERGSSLLPKGIKSVTGNFSRGEVIRICNLQGRDIAHGVSRYNSDALRRIAGHHSQQIDAILGYEYGPVAVHRDDMITR</sequence>
<keyword id="KW-0028">Amino-acid biosynthesis</keyword>
<keyword id="KW-0067">ATP-binding</keyword>
<keyword id="KW-0963">Cytoplasm</keyword>
<keyword id="KW-0418">Kinase</keyword>
<keyword id="KW-0547">Nucleotide-binding</keyword>
<keyword id="KW-0641">Proline biosynthesis</keyword>
<keyword id="KW-1185">Reference proteome</keyword>
<keyword id="KW-0808">Transferase</keyword>